<accession>P0CD73</accession>
<accession>O84506</accession>
<organism>
    <name type="scientific">Chlamydia trachomatis serovar D (strain ATCC VR-885 / DSM 19411 / UW-3/Cx)</name>
    <dbReference type="NCBI Taxonomy" id="272561"/>
    <lineage>
        <taxon>Bacteria</taxon>
        <taxon>Pseudomonadati</taxon>
        <taxon>Chlamydiota</taxon>
        <taxon>Chlamydiia</taxon>
        <taxon>Chlamydiales</taxon>
        <taxon>Chlamydiaceae</taxon>
        <taxon>Chlamydia/Chlamydophila group</taxon>
        <taxon>Chlamydia</taxon>
    </lineage>
</organism>
<name>MNMG_CHLTR</name>
<comment type="function">
    <text evidence="1">NAD-binding protein involved in the addition of a carboxymethylaminomethyl (cmnm) group at the wobble position (U34) of certain tRNAs, forming tRNA-cmnm(5)s(2)U34.</text>
</comment>
<comment type="cofactor">
    <cofactor evidence="1">
        <name>FAD</name>
        <dbReference type="ChEBI" id="CHEBI:57692"/>
    </cofactor>
</comment>
<comment type="subunit">
    <text evidence="1">Homodimer. Heterotetramer of two MnmE and two MnmG subunits.</text>
</comment>
<comment type="subcellular location">
    <subcellularLocation>
        <location evidence="1">Cytoplasm</location>
    </subcellularLocation>
</comment>
<comment type="similarity">
    <text evidence="1">Belongs to the MnmG family.</text>
</comment>
<keyword id="KW-0963">Cytoplasm</keyword>
<keyword id="KW-0274">FAD</keyword>
<keyword id="KW-0285">Flavoprotein</keyword>
<keyword id="KW-0520">NAD</keyword>
<keyword id="KW-1185">Reference proteome</keyword>
<keyword id="KW-0819">tRNA processing</keyword>
<evidence type="ECO:0000255" key="1">
    <source>
        <dbReference type="HAMAP-Rule" id="MF_00129"/>
    </source>
</evidence>
<proteinExistence type="inferred from homology"/>
<protein>
    <recommendedName>
        <fullName evidence="1">tRNA uridine 5-carboxymethylaminomethyl modification enzyme MnmG</fullName>
    </recommendedName>
    <alternativeName>
        <fullName evidence="1">Glucose-inhibited division protein A</fullName>
    </alternativeName>
</protein>
<dbReference type="EMBL" id="AE001273">
    <property type="protein sequence ID" value="AAC68099.1"/>
    <property type="molecule type" value="Genomic_DNA"/>
</dbReference>
<dbReference type="PIR" id="H71503">
    <property type="entry name" value="H71503"/>
</dbReference>
<dbReference type="RefSeq" id="NP_220013.1">
    <property type="nucleotide sequence ID" value="NC_000117.1"/>
</dbReference>
<dbReference type="RefSeq" id="WP_010725215.1">
    <property type="nucleotide sequence ID" value="NC_000117.1"/>
</dbReference>
<dbReference type="SMR" id="P0CD73"/>
<dbReference type="FunCoup" id="P0CD73">
    <property type="interactions" value="278"/>
</dbReference>
<dbReference type="STRING" id="272561.CT_498"/>
<dbReference type="EnsemblBacteria" id="AAC68099">
    <property type="protein sequence ID" value="AAC68099"/>
    <property type="gene ID" value="CT_498"/>
</dbReference>
<dbReference type="GeneID" id="884271"/>
<dbReference type="KEGG" id="ctr:CT_498"/>
<dbReference type="PATRIC" id="fig|272561.5.peg.542"/>
<dbReference type="HOGENOM" id="CLU_007831_2_2_0"/>
<dbReference type="InParanoid" id="P0CD73"/>
<dbReference type="OrthoDB" id="9815560at2"/>
<dbReference type="Proteomes" id="UP000000431">
    <property type="component" value="Chromosome"/>
</dbReference>
<dbReference type="GO" id="GO:0005829">
    <property type="term" value="C:cytosol"/>
    <property type="evidence" value="ECO:0000318"/>
    <property type="project" value="GO_Central"/>
</dbReference>
<dbReference type="GO" id="GO:0050660">
    <property type="term" value="F:flavin adenine dinucleotide binding"/>
    <property type="evidence" value="ECO:0000318"/>
    <property type="project" value="GO_Central"/>
</dbReference>
<dbReference type="GO" id="GO:0030488">
    <property type="term" value="P:tRNA methylation"/>
    <property type="evidence" value="ECO:0000318"/>
    <property type="project" value="GO_Central"/>
</dbReference>
<dbReference type="GO" id="GO:0002098">
    <property type="term" value="P:tRNA wobble uridine modification"/>
    <property type="evidence" value="ECO:0000318"/>
    <property type="project" value="GO_Central"/>
</dbReference>
<dbReference type="FunFam" id="1.10.150.570:FF:000001">
    <property type="entry name" value="tRNA uridine 5-carboxymethylaminomethyl modification enzyme MnmG"/>
    <property type="match status" value="1"/>
</dbReference>
<dbReference type="FunFam" id="3.50.50.60:FF:000002">
    <property type="entry name" value="tRNA uridine 5-carboxymethylaminomethyl modification enzyme MnmG"/>
    <property type="match status" value="1"/>
</dbReference>
<dbReference type="FunFam" id="3.50.50.60:FF:000010">
    <property type="entry name" value="tRNA uridine 5-carboxymethylaminomethyl modification enzyme MnmG"/>
    <property type="match status" value="1"/>
</dbReference>
<dbReference type="Gene3D" id="3.50.50.60">
    <property type="entry name" value="FAD/NAD(P)-binding domain"/>
    <property type="match status" value="2"/>
</dbReference>
<dbReference type="Gene3D" id="1.10.150.570">
    <property type="entry name" value="GidA associated domain, C-terminal subdomain"/>
    <property type="match status" value="1"/>
</dbReference>
<dbReference type="Gene3D" id="1.10.10.1800">
    <property type="entry name" value="tRNA uridine 5-carboxymethylaminomethyl modification enzyme MnmG/GidA"/>
    <property type="match status" value="1"/>
</dbReference>
<dbReference type="HAMAP" id="MF_00129">
    <property type="entry name" value="MnmG_GidA"/>
    <property type="match status" value="1"/>
</dbReference>
<dbReference type="InterPro" id="IPR036188">
    <property type="entry name" value="FAD/NAD-bd_sf"/>
</dbReference>
<dbReference type="InterPro" id="IPR049312">
    <property type="entry name" value="GIDA_C_N"/>
</dbReference>
<dbReference type="InterPro" id="IPR004416">
    <property type="entry name" value="MnmG"/>
</dbReference>
<dbReference type="InterPro" id="IPR002218">
    <property type="entry name" value="MnmG-rel"/>
</dbReference>
<dbReference type="InterPro" id="IPR020595">
    <property type="entry name" value="MnmG-rel_CS"/>
</dbReference>
<dbReference type="InterPro" id="IPR026904">
    <property type="entry name" value="MnmG_C"/>
</dbReference>
<dbReference type="InterPro" id="IPR047001">
    <property type="entry name" value="MnmG_C_subdom"/>
</dbReference>
<dbReference type="InterPro" id="IPR044920">
    <property type="entry name" value="MnmG_C_subdom_sf"/>
</dbReference>
<dbReference type="InterPro" id="IPR040131">
    <property type="entry name" value="MnmG_N"/>
</dbReference>
<dbReference type="NCBIfam" id="TIGR00136">
    <property type="entry name" value="mnmG_gidA"/>
    <property type="match status" value="1"/>
</dbReference>
<dbReference type="PANTHER" id="PTHR11806">
    <property type="entry name" value="GLUCOSE INHIBITED DIVISION PROTEIN A"/>
    <property type="match status" value="1"/>
</dbReference>
<dbReference type="PANTHER" id="PTHR11806:SF0">
    <property type="entry name" value="PROTEIN MTO1 HOMOLOG, MITOCHONDRIAL"/>
    <property type="match status" value="1"/>
</dbReference>
<dbReference type="Pfam" id="PF01134">
    <property type="entry name" value="GIDA"/>
    <property type="match status" value="1"/>
</dbReference>
<dbReference type="Pfam" id="PF21680">
    <property type="entry name" value="GIDA_C_1st"/>
    <property type="match status" value="1"/>
</dbReference>
<dbReference type="Pfam" id="PF13932">
    <property type="entry name" value="SAM_GIDA_C"/>
    <property type="match status" value="1"/>
</dbReference>
<dbReference type="SMART" id="SM01228">
    <property type="entry name" value="GIDA_assoc_3"/>
    <property type="match status" value="1"/>
</dbReference>
<dbReference type="SUPFAM" id="SSF51905">
    <property type="entry name" value="FAD/NAD(P)-binding domain"/>
    <property type="match status" value="1"/>
</dbReference>
<dbReference type="PROSITE" id="PS01280">
    <property type="entry name" value="GIDA_1"/>
    <property type="match status" value="1"/>
</dbReference>
<dbReference type="PROSITE" id="PS01281">
    <property type="entry name" value="GIDA_2"/>
    <property type="match status" value="1"/>
</dbReference>
<sequence>MWTFPVDYDVIVIGAGHAGCEAAYCAAKMGASVLLLTSNLDTIAKLSCNPAVGGIGKGHIVREIDALGGIMAEITDLSGIQFRILNQTKGPAVRAPRAQVDKQLYHIHMKRLLEQVPGLHIMQGTAEALLDNGEKVLGVSTKEGWAYLGKTVVLSSGTFMRGLIHIGTQNFSGGRLGDAASLGLSEDLKRLGFPLGRLKTGTPARLLASSIDFSVMEEQPGDHNVCFVHRNEMFVPTLPQVSCHITHTTDQTKDLITKNLHRSALYGGRIEGVGPRYCPSIEDKIVKFADKDRHHIFIEPEGLNTQEVYVNGLSTSMPFDVQYDIIRSVSGLENAIITRPAYAIEYDYVHGNVIFPSLESKLIEGLFLCGQINGTTGYEEAAAQGLIAGVNAVNKVLRHPPFVPSRQESYIGVMLDDLTTQVLDEPYRMFTSRAEHRLLLRQDNAGMRLSHYGHSLGLLSSERYAMFQEQKACIEQEKERLSKTFRKYGDTVVPLTKVLCRPEVSYQQLLTEFPADVRDLGPVVGASLEMEIKYSGYISRQQTLIRSMERSENISIPEDIDYHSISALSLEAREKLSKFTPRTIGSAARISGISVADIQVLMVSLKKDAH</sequence>
<gene>
    <name evidence="1" type="primary">mnmG</name>
    <name evidence="1" type="synonym">gidA</name>
    <name type="ordered locus">CT_498</name>
</gene>
<feature type="chain" id="PRO_0000117083" description="tRNA uridine 5-carboxymethylaminomethyl modification enzyme MnmG">
    <location>
        <begin position="1"/>
        <end position="610"/>
    </location>
</feature>
<feature type="binding site" evidence="1">
    <location>
        <begin position="14"/>
        <end position="19"/>
    </location>
    <ligand>
        <name>FAD</name>
        <dbReference type="ChEBI" id="CHEBI:57692"/>
    </ligand>
</feature>
<feature type="binding site" evidence="1">
    <location>
        <begin position="274"/>
        <end position="288"/>
    </location>
    <ligand>
        <name>NAD(+)</name>
        <dbReference type="ChEBI" id="CHEBI:57540"/>
    </ligand>
</feature>
<reference key="1">
    <citation type="journal article" date="1998" name="Science">
        <title>Genome sequence of an obligate intracellular pathogen of humans: Chlamydia trachomatis.</title>
        <authorList>
            <person name="Stephens R.S."/>
            <person name="Kalman S."/>
            <person name="Lammel C.J."/>
            <person name="Fan J."/>
            <person name="Marathe R."/>
            <person name="Aravind L."/>
            <person name="Mitchell W.P."/>
            <person name="Olinger L."/>
            <person name="Tatusov R.L."/>
            <person name="Zhao Q."/>
            <person name="Koonin E.V."/>
            <person name="Davis R.W."/>
        </authorList>
    </citation>
    <scope>NUCLEOTIDE SEQUENCE [LARGE SCALE GENOMIC DNA]</scope>
    <source>
        <strain>ATCC VR-885 / DSM 19411 / UW-3/Cx</strain>
    </source>
</reference>